<organism>
    <name type="scientific">Chlamydia trachomatis serovar L2 (strain ATCC VR-902B / DSM 19102 / 434/Bu)</name>
    <dbReference type="NCBI Taxonomy" id="471472"/>
    <lineage>
        <taxon>Bacteria</taxon>
        <taxon>Pseudomonadati</taxon>
        <taxon>Chlamydiota</taxon>
        <taxon>Chlamydiia</taxon>
        <taxon>Chlamydiales</taxon>
        <taxon>Chlamydiaceae</taxon>
        <taxon>Chlamydia/Chlamydophila group</taxon>
        <taxon>Chlamydia</taxon>
    </lineage>
</organism>
<dbReference type="EC" id="5.4.2.11" evidence="1"/>
<dbReference type="EMBL" id="AM884176">
    <property type="protein sequence ID" value="CAP03535.1"/>
    <property type="molecule type" value="Genomic_DNA"/>
</dbReference>
<dbReference type="RefSeq" id="WP_009873325.1">
    <property type="nucleotide sequence ID" value="NC_010287.1"/>
</dbReference>
<dbReference type="RefSeq" id="YP_001654182.1">
    <property type="nucleotide sequence ID" value="NC_010287.1"/>
</dbReference>
<dbReference type="SMR" id="B0B8U8"/>
<dbReference type="KEGG" id="ctb:CTL0091"/>
<dbReference type="PATRIC" id="fig|471472.4.peg.99"/>
<dbReference type="HOGENOM" id="CLU_033323_1_4_0"/>
<dbReference type="UniPathway" id="UPA00109">
    <property type="reaction ID" value="UER00186"/>
</dbReference>
<dbReference type="Proteomes" id="UP001154402">
    <property type="component" value="Chromosome"/>
</dbReference>
<dbReference type="GO" id="GO:0004619">
    <property type="term" value="F:phosphoglycerate mutase activity"/>
    <property type="evidence" value="ECO:0007669"/>
    <property type="project" value="UniProtKB-EC"/>
</dbReference>
<dbReference type="GO" id="GO:0006094">
    <property type="term" value="P:gluconeogenesis"/>
    <property type="evidence" value="ECO:0007669"/>
    <property type="project" value="UniProtKB-UniRule"/>
</dbReference>
<dbReference type="GO" id="GO:0006096">
    <property type="term" value="P:glycolytic process"/>
    <property type="evidence" value="ECO:0007669"/>
    <property type="project" value="UniProtKB-UniRule"/>
</dbReference>
<dbReference type="CDD" id="cd07067">
    <property type="entry name" value="HP_PGM_like"/>
    <property type="match status" value="1"/>
</dbReference>
<dbReference type="Gene3D" id="3.40.50.1240">
    <property type="entry name" value="Phosphoglycerate mutase-like"/>
    <property type="match status" value="1"/>
</dbReference>
<dbReference type="HAMAP" id="MF_01039">
    <property type="entry name" value="PGAM_GpmA"/>
    <property type="match status" value="1"/>
</dbReference>
<dbReference type="InterPro" id="IPR013078">
    <property type="entry name" value="His_Pase_superF_clade-1"/>
</dbReference>
<dbReference type="InterPro" id="IPR029033">
    <property type="entry name" value="His_PPase_superfam"/>
</dbReference>
<dbReference type="InterPro" id="IPR001345">
    <property type="entry name" value="PG/BPGM_mutase_AS"/>
</dbReference>
<dbReference type="InterPro" id="IPR005952">
    <property type="entry name" value="Phosphogly_mut1"/>
</dbReference>
<dbReference type="NCBIfam" id="NF002217">
    <property type="entry name" value="PRK01112.1"/>
    <property type="match status" value="1"/>
</dbReference>
<dbReference type="PANTHER" id="PTHR11931">
    <property type="entry name" value="PHOSPHOGLYCERATE MUTASE"/>
    <property type="match status" value="1"/>
</dbReference>
<dbReference type="Pfam" id="PF00300">
    <property type="entry name" value="His_Phos_1"/>
    <property type="match status" value="2"/>
</dbReference>
<dbReference type="PIRSF" id="PIRSF000709">
    <property type="entry name" value="6PFK_2-Ptase"/>
    <property type="match status" value="1"/>
</dbReference>
<dbReference type="SMART" id="SM00855">
    <property type="entry name" value="PGAM"/>
    <property type="match status" value="1"/>
</dbReference>
<dbReference type="SUPFAM" id="SSF53254">
    <property type="entry name" value="Phosphoglycerate mutase-like"/>
    <property type="match status" value="1"/>
</dbReference>
<dbReference type="PROSITE" id="PS00175">
    <property type="entry name" value="PG_MUTASE"/>
    <property type="match status" value="1"/>
</dbReference>
<protein>
    <recommendedName>
        <fullName evidence="1">2,3-bisphosphoglycerate-dependent phosphoglycerate mutase</fullName>
        <shortName evidence="1">BPG-dependent PGAM</shortName>
        <shortName evidence="1">PGAM</shortName>
        <shortName evidence="1">Phosphoglyceromutase</shortName>
        <shortName evidence="1">dPGM</shortName>
        <ecNumber evidence="1">5.4.2.11</ecNumber>
    </recommendedName>
</protein>
<evidence type="ECO:0000255" key="1">
    <source>
        <dbReference type="HAMAP-Rule" id="MF_01039"/>
    </source>
</evidence>
<sequence length="226" mass="25832">MTLLILLRHGQSVWNQKNLFTGWVDIPLSQQGIQEAIAAGESIKHLPIDCIFTSTLVRSLMTALLAMTNHSSQKVPYIVHEERPDMSRIHSQKEMEQMIPLFQSSALNERMYGELQGKNKQEVAVQFGEEQVKLWRRSYRIAPPQGESLFDTGQRTLPYFQERIFPLLQQGKNIFISAHGNSLRSLIMDLEKLSEEQVLSLELPTGQPIVYEWTGQKFTKHAPSLG</sequence>
<feature type="chain" id="PRO_1000135935" description="2,3-bisphosphoglycerate-dependent phosphoglycerate mutase">
    <location>
        <begin position="1"/>
        <end position="226"/>
    </location>
</feature>
<feature type="active site" description="Tele-phosphohistidine intermediate" evidence="1">
    <location>
        <position position="9"/>
    </location>
</feature>
<feature type="active site" description="Proton donor/acceptor" evidence="1">
    <location>
        <position position="109"/>
    </location>
</feature>
<feature type="binding site" evidence="1">
    <location>
        <begin position="8"/>
        <end position="15"/>
    </location>
    <ligand>
        <name>substrate</name>
    </ligand>
</feature>
<feature type="binding site" evidence="1">
    <location>
        <begin position="21"/>
        <end position="22"/>
    </location>
    <ligand>
        <name>substrate</name>
    </ligand>
</feature>
<feature type="binding site" evidence="1">
    <location>
        <position position="58"/>
    </location>
    <ligand>
        <name>substrate</name>
    </ligand>
</feature>
<feature type="binding site" evidence="1">
    <location>
        <begin position="109"/>
        <end position="112"/>
    </location>
    <ligand>
        <name>substrate</name>
    </ligand>
</feature>
<feature type="binding site" evidence="1">
    <location>
        <position position="120"/>
    </location>
    <ligand>
        <name>substrate</name>
    </ligand>
</feature>
<feature type="binding site" evidence="1">
    <location>
        <begin position="136"/>
        <end position="137"/>
    </location>
    <ligand>
        <name>substrate</name>
    </ligand>
</feature>
<feature type="binding site" evidence="1">
    <location>
        <begin position="180"/>
        <end position="181"/>
    </location>
    <ligand>
        <name>substrate</name>
    </ligand>
</feature>
<feature type="site" description="Transition state stabilizer" evidence="1">
    <location>
        <position position="179"/>
    </location>
</feature>
<proteinExistence type="inferred from homology"/>
<accession>B0B8U8</accession>
<name>GPMA_CHLT2</name>
<reference key="1">
    <citation type="journal article" date="2008" name="Genome Res.">
        <title>Chlamydia trachomatis: genome sequence analysis of lymphogranuloma venereum isolates.</title>
        <authorList>
            <person name="Thomson N.R."/>
            <person name="Holden M.T.G."/>
            <person name="Carder C."/>
            <person name="Lennard N."/>
            <person name="Lockey S.J."/>
            <person name="Marsh P."/>
            <person name="Skipp P."/>
            <person name="O'Connor C.D."/>
            <person name="Goodhead I."/>
            <person name="Norbertzcak H."/>
            <person name="Harris B."/>
            <person name="Ormond D."/>
            <person name="Rance R."/>
            <person name="Quail M.A."/>
            <person name="Parkhill J."/>
            <person name="Stephens R.S."/>
            <person name="Clarke I.N."/>
        </authorList>
    </citation>
    <scope>NUCLEOTIDE SEQUENCE [LARGE SCALE GENOMIC DNA]</scope>
    <source>
        <strain>ATCC VR-902B / DSM 19102 / 434/Bu</strain>
    </source>
</reference>
<keyword id="KW-0312">Gluconeogenesis</keyword>
<keyword id="KW-0324">Glycolysis</keyword>
<keyword id="KW-0413">Isomerase</keyword>
<gene>
    <name evidence="1" type="primary">gpmA</name>
    <name type="ordered locus">CTL0091</name>
</gene>
<comment type="function">
    <text evidence="1">Catalyzes the interconversion of 2-phosphoglycerate and 3-phosphoglycerate.</text>
</comment>
<comment type="catalytic activity">
    <reaction evidence="1">
        <text>(2R)-2-phosphoglycerate = (2R)-3-phosphoglycerate</text>
        <dbReference type="Rhea" id="RHEA:15901"/>
        <dbReference type="ChEBI" id="CHEBI:58272"/>
        <dbReference type="ChEBI" id="CHEBI:58289"/>
        <dbReference type="EC" id="5.4.2.11"/>
    </reaction>
</comment>
<comment type="pathway">
    <text evidence="1">Carbohydrate degradation; glycolysis; pyruvate from D-glyceraldehyde 3-phosphate: step 3/5.</text>
</comment>
<comment type="similarity">
    <text evidence="1">Belongs to the phosphoglycerate mutase family. BPG-dependent PGAM subfamily.</text>
</comment>